<name>RS5_RHIJ3</name>
<evidence type="ECO:0000255" key="1">
    <source>
        <dbReference type="HAMAP-Rule" id="MF_01307"/>
    </source>
</evidence>
<evidence type="ECO:0000305" key="2"/>
<keyword id="KW-0687">Ribonucleoprotein</keyword>
<keyword id="KW-0689">Ribosomal protein</keyword>
<keyword id="KW-0694">RNA-binding</keyword>
<keyword id="KW-0699">rRNA-binding</keyword>
<gene>
    <name evidence="1" type="primary">rpsE</name>
    <name type="ordered locus">RL1791</name>
</gene>
<comment type="function">
    <text evidence="1">With S4 and S12 plays an important role in translational accuracy.</text>
</comment>
<comment type="function">
    <text evidence="1">Located at the back of the 30S subunit body where it stabilizes the conformation of the head with respect to the body.</text>
</comment>
<comment type="subunit">
    <text evidence="1">Part of the 30S ribosomal subunit. Contacts proteins S4 and S8.</text>
</comment>
<comment type="domain">
    <text>The N-terminal domain interacts with the head of the 30S subunit; the C-terminal domain interacts with the body and contacts protein S4. The interaction surface between S4 and S5 is involved in control of translational fidelity.</text>
</comment>
<comment type="similarity">
    <text evidence="1">Belongs to the universal ribosomal protein uS5 family.</text>
</comment>
<dbReference type="EMBL" id="AM236080">
    <property type="protein sequence ID" value="CAK07286.1"/>
    <property type="molecule type" value="Genomic_DNA"/>
</dbReference>
<dbReference type="RefSeq" id="WP_003547565.1">
    <property type="nucleotide sequence ID" value="NC_008380.1"/>
</dbReference>
<dbReference type="SMR" id="Q1MIC4"/>
<dbReference type="EnsemblBacteria" id="CAK07286">
    <property type="protein sequence ID" value="CAK07286"/>
    <property type="gene ID" value="RL1791"/>
</dbReference>
<dbReference type="GeneID" id="67484980"/>
<dbReference type="KEGG" id="rle:RL1791"/>
<dbReference type="eggNOG" id="COG0098">
    <property type="taxonomic scope" value="Bacteria"/>
</dbReference>
<dbReference type="HOGENOM" id="CLU_065898_2_2_5"/>
<dbReference type="Proteomes" id="UP000006575">
    <property type="component" value="Chromosome"/>
</dbReference>
<dbReference type="GO" id="GO:0015935">
    <property type="term" value="C:small ribosomal subunit"/>
    <property type="evidence" value="ECO:0007669"/>
    <property type="project" value="InterPro"/>
</dbReference>
<dbReference type="GO" id="GO:0019843">
    <property type="term" value="F:rRNA binding"/>
    <property type="evidence" value="ECO:0007669"/>
    <property type="project" value="UniProtKB-UniRule"/>
</dbReference>
<dbReference type="GO" id="GO:0003735">
    <property type="term" value="F:structural constituent of ribosome"/>
    <property type="evidence" value="ECO:0007669"/>
    <property type="project" value="InterPro"/>
</dbReference>
<dbReference type="GO" id="GO:0006412">
    <property type="term" value="P:translation"/>
    <property type="evidence" value="ECO:0007669"/>
    <property type="project" value="UniProtKB-UniRule"/>
</dbReference>
<dbReference type="FunFam" id="3.30.160.20:FF:000001">
    <property type="entry name" value="30S ribosomal protein S5"/>
    <property type="match status" value="1"/>
</dbReference>
<dbReference type="FunFam" id="3.30.230.10:FF:000002">
    <property type="entry name" value="30S ribosomal protein S5"/>
    <property type="match status" value="1"/>
</dbReference>
<dbReference type="Gene3D" id="3.30.160.20">
    <property type="match status" value="1"/>
</dbReference>
<dbReference type="Gene3D" id="3.30.230.10">
    <property type="match status" value="1"/>
</dbReference>
<dbReference type="HAMAP" id="MF_01307_B">
    <property type="entry name" value="Ribosomal_uS5_B"/>
    <property type="match status" value="1"/>
</dbReference>
<dbReference type="InterPro" id="IPR020568">
    <property type="entry name" value="Ribosomal_Su5_D2-typ_SF"/>
</dbReference>
<dbReference type="InterPro" id="IPR000851">
    <property type="entry name" value="Ribosomal_uS5"/>
</dbReference>
<dbReference type="InterPro" id="IPR005712">
    <property type="entry name" value="Ribosomal_uS5_bac-type"/>
</dbReference>
<dbReference type="InterPro" id="IPR005324">
    <property type="entry name" value="Ribosomal_uS5_C"/>
</dbReference>
<dbReference type="InterPro" id="IPR013810">
    <property type="entry name" value="Ribosomal_uS5_N"/>
</dbReference>
<dbReference type="InterPro" id="IPR018192">
    <property type="entry name" value="Ribosomal_uS5_N_CS"/>
</dbReference>
<dbReference type="InterPro" id="IPR014721">
    <property type="entry name" value="Ribsml_uS5_D2-typ_fold_subgr"/>
</dbReference>
<dbReference type="NCBIfam" id="TIGR01021">
    <property type="entry name" value="rpsE_bact"/>
    <property type="match status" value="1"/>
</dbReference>
<dbReference type="PANTHER" id="PTHR48277">
    <property type="entry name" value="MITOCHONDRIAL RIBOSOMAL PROTEIN S5"/>
    <property type="match status" value="1"/>
</dbReference>
<dbReference type="PANTHER" id="PTHR48277:SF1">
    <property type="entry name" value="MITOCHONDRIAL RIBOSOMAL PROTEIN S5"/>
    <property type="match status" value="1"/>
</dbReference>
<dbReference type="Pfam" id="PF00333">
    <property type="entry name" value="Ribosomal_S5"/>
    <property type="match status" value="1"/>
</dbReference>
<dbReference type="Pfam" id="PF03719">
    <property type="entry name" value="Ribosomal_S5_C"/>
    <property type="match status" value="1"/>
</dbReference>
<dbReference type="SUPFAM" id="SSF54768">
    <property type="entry name" value="dsRNA-binding domain-like"/>
    <property type="match status" value="1"/>
</dbReference>
<dbReference type="SUPFAM" id="SSF54211">
    <property type="entry name" value="Ribosomal protein S5 domain 2-like"/>
    <property type="match status" value="1"/>
</dbReference>
<dbReference type="PROSITE" id="PS00585">
    <property type="entry name" value="RIBOSOMAL_S5"/>
    <property type="match status" value="1"/>
</dbReference>
<dbReference type="PROSITE" id="PS50881">
    <property type="entry name" value="S5_DSRBD"/>
    <property type="match status" value="1"/>
</dbReference>
<proteinExistence type="inferred from homology"/>
<protein>
    <recommendedName>
        <fullName evidence="1">Small ribosomal subunit protein uS5</fullName>
    </recommendedName>
    <alternativeName>
        <fullName evidence="2">30S ribosomal protein S5</fullName>
    </alternativeName>
</protein>
<organism>
    <name type="scientific">Rhizobium johnstonii (strain DSM 114642 / LMG 32736 / 3841)</name>
    <name type="common">Rhizobium leguminosarum bv. viciae</name>
    <dbReference type="NCBI Taxonomy" id="216596"/>
    <lineage>
        <taxon>Bacteria</taxon>
        <taxon>Pseudomonadati</taxon>
        <taxon>Pseudomonadota</taxon>
        <taxon>Alphaproteobacteria</taxon>
        <taxon>Hyphomicrobiales</taxon>
        <taxon>Rhizobiaceae</taxon>
        <taxon>Rhizobium/Agrobacterium group</taxon>
        <taxon>Rhizobium</taxon>
        <taxon>Rhizobium johnstonii</taxon>
    </lineage>
</organism>
<accession>Q1MIC4</accession>
<feature type="chain" id="PRO_1000086044" description="Small ribosomal subunit protein uS5">
    <location>
        <begin position="1"/>
        <end position="189"/>
    </location>
</feature>
<feature type="domain" description="S5 DRBM" evidence="1">
    <location>
        <begin position="22"/>
        <end position="85"/>
    </location>
</feature>
<sequence length="189" mass="20681">MAQERRPQRDDRQSREERDSEFVDKLVAINRVAKVVKGGRRFGFAALVVVGDQKGRVGFGHGKAREVPEAIRKATEAAKRELIFVPLRDGRTLHHDVHGRHGAGKVLLRSAKVGTGIIAGGPMRAVFETLGMHDVVAKSTGSSNPYNMVRATFDALKHQVHPKDIAAQRGIKYATLQARRSASGNASEE</sequence>
<reference key="1">
    <citation type="journal article" date="2006" name="Genome Biol.">
        <title>The genome of Rhizobium leguminosarum has recognizable core and accessory components.</title>
        <authorList>
            <person name="Young J.P.W."/>
            <person name="Crossman L.C."/>
            <person name="Johnston A.W.B."/>
            <person name="Thomson N.R."/>
            <person name="Ghazoui Z.F."/>
            <person name="Hull K.H."/>
            <person name="Wexler M."/>
            <person name="Curson A.R.J."/>
            <person name="Todd J.D."/>
            <person name="Poole P.S."/>
            <person name="Mauchline T.H."/>
            <person name="East A.K."/>
            <person name="Quail M.A."/>
            <person name="Churcher C."/>
            <person name="Arrowsmith C."/>
            <person name="Cherevach I."/>
            <person name="Chillingworth T."/>
            <person name="Clarke K."/>
            <person name="Cronin A."/>
            <person name="Davis P."/>
            <person name="Fraser A."/>
            <person name="Hance Z."/>
            <person name="Hauser H."/>
            <person name="Jagels K."/>
            <person name="Moule S."/>
            <person name="Mungall K."/>
            <person name="Norbertczak H."/>
            <person name="Rabbinowitsch E."/>
            <person name="Sanders M."/>
            <person name="Simmonds M."/>
            <person name="Whitehead S."/>
            <person name="Parkhill J."/>
        </authorList>
    </citation>
    <scope>NUCLEOTIDE SEQUENCE [LARGE SCALE GENOMIC DNA]</scope>
    <source>
        <strain>DSM 114642 / LMG 32736 / 3841</strain>
    </source>
</reference>